<accession>A1RP94</accession>
<protein>
    <recommendedName>
        <fullName evidence="1">Selenide, water dikinase</fullName>
        <ecNumber evidence="1">2.7.9.3</ecNumber>
    </recommendedName>
    <alternativeName>
        <fullName evidence="1">Selenium donor protein</fullName>
    </alternativeName>
    <alternativeName>
        <fullName evidence="1">Selenophosphate synthase</fullName>
    </alternativeName>
</protein>
<reference key="1">
    <citation type="submission" date="2006-12" db="EMBL/GenBank/DDBJ databases">
        <title>Complete sequence of Shewanella sp. W3-18-1.</title>
        <authorList>
            <consortium name="US DOE Joint Genome Institute"/>
            <person name="Copeland A."/>
            <person name="Lucas S."/>
            <person name="Lapidus A."/>
            <person name="Barry K."/>
            <person name="Detter J.C."/>
            <person name="Glavina del Rio T."/>
            <person name="Hammon N."/>
            <person name="Israni S."/>
            <person name="Dalin E."/>
            <person name="Tice H."/>
            <person name="Pitluck S."/>
            <person name="Chain P."/>
            <person name="Malfatti S."/>
            <person name="Shin M."/>
            <person name="Vergez L."/>
            <person name="Schmutz J."/>
            <person name="Larimer F."/>
            <person name="Land M."/>
            <person name="Hauser L."/>
            <person name="Kyrpides N."/>
            <person name="Lykidis A."/>
            <person name="Tiedje J."/>
            <person name="Richardson P."/>
        </authorList>
    </citation>
    <scope>NUCLEOTIDE SEQUENCE [LARGE SCALE GENOMIC DNA]</scope>
    <source>
        <strain>W3-18-1</strain>
    </source>
</reference>
<gene>
    <name evidence="1" type="primary">selD</name>
    <name type="ordered locus">Sputw3181_3680</name>
</gene>
<keyword id="KW-0067">ATP-binding</keyword>
<keyword id="KW-0418">Kinase</keyword>
<keyword id="KW-0460">Magnesium</keyword>
<keyword id="KW-0479">Metal-binding</keyword>
<keyword id="KW-0547">Nucleotide-binding</keyword>
<keyword id="KW-0711">Selenium</keyword>
<keyword id="KW-0808">Transferase</keyword>
<evidence type="ECO:0000255" key="1">
    <source>
        <dbReference type="HAMAP-Rule" id="MF_00625"/>
    </source>
</evidence>
<dbReference type="EC" id="2.7.9.3" evidence="1"/>
<dbReference type="EMBL" id="CP000503">
    <property type="protein sequence ID" value="ABM26489.1"/>
    <property type="molecule type" value="Genomic_DNA"/>
</dbReference>
<dbReference type="RefSeq" id="WP_011790920.1">
    <property type="nucleotide sequence ID" value="NC_008750.1"/>
</dbReference>
<dbReference type="SMR" id="A1RP94"/>
<dbReference type="KEGG" id="shw:Sputw3181_3680"/>
<dbReference type="HOGENOM" id="CLU_032859_0_1_6"/>
<dbReference type="Proteomes" id="UP000002597">
    <property type="component" value="Chromosome"/>
</dbReference>
<dbReference type="GO" id="GO:0005737">
    <property type="term" value="C:cytoplasm"/>
    <property type="evidence" value="ECO:0007669"/>
    <property type="project" value="TreeGrafter"/>
</dbReference>
<dbReference type="GO" id="GO:0005524">
    <property type="term" value="F:ATP binding"/>
    <property type="evidence" value="ECO:0007669"/>
    <property type="project" value="UniProtKB-UniRule"/>
</dbReference>
<dbReference type="GO" id="GO:0000287">
    <property type="term" value="F:magnesium ion binding"/>
    <property type="evidence" value="ECO:0007669"/>
    <property type="project" value="UniProtKB-UniRule"/>
</dbReference>
<dbReference type="GO" id="GO:0004756">
    <property type="term" value="F:selenide, water dikinase activity"/>
    <property type="evidence" value="ECO:0007669"/>
    <property type="project" value="UniProtKB-UniRule"/>
</dbReference>
<dbReference type="GO" id="GO:0016260">
    <property type="term" value="P:selenocysteine biosynthetic process"/>
    <property type="evidence" value="ECO:0007669"/>
    <property type="project" value="InterPro"/>
</dbReference>
<dbReference type="CDD" id="cd02195">
    <property type="entry name" value="SelD"/>
    <property type="match status" value="1"/>
</dbReference>
<dbReference type="FunFam" id="3.30.1330.10:FF:000003">
    <property type="entry name" value="Selenide, water dikinase"/>
    <property type="match status" value="1"/>
</dbReference>
<dbReference type="FunFam" id="3.90.650.10:FF:000004">
    <property type="entry name" value="Selenide, water dikinase"/>
    <property type="match status" value="1"/>
</dbReference>
<dbReference type="Gene3D" id="3.90.650.10">
    <property type="entry name" value="PurM-like C-terminal domain"/>
    <property type="match status" value="1"/>
</dbReference>
<dbReference type="Gene3D" id="3.30.1330.10">
    <property type="entry name" value="PurM-like, N-terminal domain"/>
    <property type="match status" value="1"/>
</dbReference>
<dbReference type="HAMAP" id="MF_00625">
    <property type="entry name" value="SelD"/>
    <property type="match status" value="1"/>
</dbReference>
<dbReference type="InterPro" id="IPR010918">
    <property type="entry name" value="PurM-like_C_dom"/>
</dbReference>
<dbReference type="InterPro" id="IPR036676">
    <property type="entry name" value="PurM-like_C_sf"/>
</dbReference>
<dbReference type="InterPro" id="IPR016188">
    <property type="entry name" value="PurM-like_N"/>
</dbReference>
<dbReference type="InterPro" id="IPR036921">
    <property type="entry name" value="PurM-like_N_sf"/>
</dbReference>
<dbReference type="InterPro" id="IPR023061">
    <property type="entry name" value="SelD_I"/>
</dbReference>
<dbReference type="InterPro" id="IPR004536">
    <property type="entry name" value="SPS/SelD"/>
</dbReference>
<dbReference type="NCBIfam" id="NF002098">
    <property type="entry name" value="PRK00943.1"/>
    <property type="match status" value="1"/>
</dbReference>
<dbReference type="NCBIfam" id="TIGR00476">
    <property type="entry name" value="selD"/>
    <property type="match status" value="1"/>
</dbReference>
<dbReference type="PANTHER" id="PTHR10256:SF0">
    <property type="entry name" value="INACTIVE SELENIDE, WATER DIKINASE-LIKE PROTEIN-RELATED"/>
    <property type="match status" value="1"/>
</dbReference>
<dbReference type="PANTHER" id="PTHR10256">
    <property type="entry name" value="SELENIDE, WATER DIKINASE"/>
    <property type="match status" value="1"/>
</dbReference>
<dbReference type="Pfam" id="PF00586">
    <property type="entry name" value="AIRS"/>
    <property type="match status" value="1"/>
</dbReference>
<dbReference type="Pfam" id="PF02769">
    <property type="entry name" value="AIRS_C"/>
    <property type="match status" value="1"/>
</dbReference>
<dbReference type="PIRSF" id="PIRSF036407">
    <property type="entry name" value="Selenphspht_syn"/>
    <property type="match status" value="1"/>
</dbReference>
<dbReference type="SUPFAM" id="SSF56042">
    <property type="entry name" value="PurM C-terminal domain-like"/>
    <property type="match status" value="1"/>
</dbReference>
<dbReference type="SUPFAM" id="SSF55326">
    <property type="entry name" value="PurM N-terminal domain-like"/>
    <property type="match status" value="1"/>
</dbReference>
<comment type="function">
    <text evidence="1">Synthesizes selenophosphate from selenide and ATP.</text>
</comment>
<comment type="catalytic activity">
    <reaction evidence="1">
        <text>hydrogenselenide + ATP + H2O = selenophosphate + AMP + phosphate + 2 H(+)</text>
        <dbReference type="Rhea" id="RHEA:18737"/>
        <dbReference type="ChEBI" id="CHEBI:15377"/>
        <dbReference type="ChEBI" id="CHEBI:15378"/>
        <dbReference type="ChEBI" id="CHEBI:16144"/>
        <dbReference type="ChEBI" id="CHEBI:29317"/>
        <dbReference type="ChEBI" id="CHEBI:30616"/>
        <dbReference type="ChEBI" id="CHEBI:43474"/>
        <dbReference type="ChEBI" id="CHEBI:456215"/>
        <dbReference type="EC" id="2.7.9.3"/>
    </reaction>
</comment>
<comment type="cofactor">
    <cofactor evidence="1">
        <name>Mg(2+)</name>
        <dbReference type="ChEBI" id="CHEBI:18420"/>
    </cofactor>
    <text evidence="1">Binds 1 Mg(2+) ion per monomer.</text>
</comment>
<comment type="subunit">
    <text evidence="1">Homodimer.</text>
</comment>
<comment type="similarity">
    <text evidence="1">Belongs to the selenophosphate synthase 1 family. Class I subfamily.</text>
</comment>
<proteinExistence type="inferred from homology"/>
<feature type="chain" id="PRO_1000051607" description="Selenide, water dikinase">
    <location>
        <begin position="1"/>
        <end position="352"/>
    </location>
</feature>
<feature type="active site" evidence="1">
    <location>
        <position position="23"/>
    </location>
</feature>
<feature type="binding site" description="in other chain" evidence="1">
    <location>
        <position position="26"/>
    </location>
    <ligand>
        <name>ATP</name>
        <dbReference type="ChEBI" id="CHEBI:30616"/>
        <note>ligand shared between dimeric partners</note>
    </ligand>
</feature>
<feature type="binding site" description="in other chain" evidence="1">
    <location>
        <begin position="54"/>
        <end position="56"/>
    </location>
    <ligand>
        <name>ATP</name>
        <dbReference type="ChEBI" id="CHEBI:30616"/>
        <note>ligand shared between dimeric partners</note>
    </ligand>
</feature>
<feature type="binding site" evidence="1">
    <location>
        <position position="57"/>
    </location>
    <ligand>
        <name>Mg(2+)</name>
        <dbReference type="ChEBI" id="CHEBI:18420"/>
    </ligand>
</feature>
<feature type="binding site" description="in other chain" evidence="1">
    <location>
        <position position="74"/>
    </location>
    <ligand>
        <name>ATP</name>
        <dbReference type="ChEBI" id="CHEBI:30616"/>
        <note>ligand shared between dimeric partners</note>
    </ligand>
</feature>
<feature type="binding site" description="in other chain" evidence="1">
    <location>
        <position position="97"/>
    </location>
    <ligand>
        <name>ATP</name>
        <dbReference type="ChEBI" id="CHEBI:30616"/>
        <note>ligand shared between dimeric partners</note>
    </ligand>
</feature>
<feature type="binding site" evidence="1">
    <location>
        <position position="97"/>
    </location>
    <ligand>
        <name>Mg(2+)</name>
        <dbReference type="ChEBI" id="CHEBI:18420"/>
    </ligand>
</feature>
<feature type="binding site" evidence="1">
    <location>
        <begin position="145"/>
        <end position="147"/>
    </location>
    <ligand>
        <name>ATP</name>
        <dbReference type="ChEBI" id="CHEBI:30616"/>
        <note>ligand shared between dimeric partners</note>
    </ligand>
</feature>
<feature type="binding site" evidence="1">
    <location>
        <position position="233"/>
    </location>
    <ligand>
        <name>Mg(2+)</name>
        <dbReference type="ChEBI" id="CHEBI:18420"/>
    </ligand>
</feature>
<feature type="site" description="Important for catalytic activity" evidence="1">
    <location>
        <position position="26"/>
    </location>
</feature>
<name>SELD_SHESW</name>
<sequence>MSDSPVTLPESIKLTEYSHGAGCGCKISPKVLSTILASQLPVFTDPNLLVGNQSRDDAAVYKLNDEIGIISTTDFFMPIVDDPFTFGRIAATNAISDIYAMGGTPIMAIAILGWPINKLPAEIAQQVVDGGRQACMEAGIMLAGGHSIDAPEPIFGLAVTGQIALSDLKQNDTAKKGDRLYLTKPIGIGILTTAQKQKKLHDEDSLIAVNAMCQLNTIGATIAKISGVNALTDVTGFGLAGHLLEMCQGANLTAKLKFDAVPLLPRALDYLALGCVPGGTHRNYDSYGEHLPELSEHQKAILCDPQTSGGLLVAVSAAAEAELIALLDANHITPICIGSLETPTTQANVVLC</sequence>
<organism>
    <name type="scientific">Shewanella sp. (strain W3-18-1)</name>
    <dbReference type="NCBI Taxonomy" id="351745"/>
    <lineage>
        <taxon>Bacteria</taxon>
        <taxon>Pseudomonadati</taxon>
        <taxon>Pseudomonadota</taxon>
        <taxon>Gammaproteobacteria</taxon>
        <taxon>Alteromonadales</taxon>
        <taxon>Shewanellaceae</taxon>
        <taxon>Shewanella</taxon>
    </lineage>
</organism>